<dbReference type="EC" id="1.11.1.5" evidence="2"/>
<dbReference type="EMBL" id="CP017625">
    <property type="protein sequence ID" value="AOW28283.1"/>
    <property type="molecule type" value="Genomic_DNA"/>
</dbReference>
<dbReference type="RefSeq" id="XP_719937.2">
    <property type="nucleotide sequence ID" value="XM_714844.2"/>
</dbReference>
<dbReference type="SMR" id="Q5AEN1"/>
<dbReference type="BioGRID" id="1221383">
    <property type="interactions" value="1"/>
</dbReference>
<dbReference type="FunCoup" id="Q5AEN1">
    <property type="interactions" value="82"/>
</dbReference>
<dbReference type="STRING" id="237561.Q5AEN1"/>
<dbReference type="PeroxiBase" id="3406">
    <property type="entry name" value="CalCcP02"/>
</dbReference>
<dbReference type="EnsemblFungi" id="C3_02480C_A-T">
    <property type="protein sequence ID" value="C3_02480C_A-T-p1"/>
    <property type="gene ID" value="C3_02480C_A"/>
</dbReference>
<dbReference type="GeneID" id="3638350"/>
<dbReference type="KEGG" id="cal:CAALFM_C302480CA"/>
<dbReference type="CGD" id="CAL0000199533">
    <property type="gene designation" value="CCP1"/>
</dbReference>
<dbReference type="VEuPathDB" id="FungiDB:C3_02480C_A"/>
<dbReference type="eggNOG" id="ENOG502QR1E">
    <property type="taxonomic scope" value="Eukaryota"/>
</dbReference>
<dbReference type="HOGENOM" id="CLU_036959_1_1_1"/>
<dbReference type="InParanoid" id="Q5AEN1"/>
<dbReference type="OMA" id="QRKWNGP"/>
<dbReference type="OrthoDB" id="2859658at2759"/>
<dbReference type="PRO" id="PR:Q5AEN1"/>
<dbReference type="Proteomes" id="UP000000559">
    <property type="component" value="Chromosome 3"/>
</dbReference>
<dbReference type="GO" id="GO:0005758">
    <property type="term" value="C:mitochondrial intermembrane space"/>
    <property type="evidence" value="ECO:0007669"/>
    <property type="project" value="UniProtKB-SubCell"/>
</dbReference>
<dbReference type="GO" id="GO:0005759">
    <property type="term" value="C:mitochondrial matrix"/>
    <property type="evidence" value="ECO:0007669"/>
    <property type="project" value="UniProtKB-SubCell"/>
</dbReference>
<dbReference type="GO" id="GO:0004130">
    <property type="term" value="F:cytochrome-c peroxidase activity"/>
    <property type="evidence" value="ECO:0007669"/>
    <property type="project" value="UniProtKB-EC"/>
</dbReference>
<dbReference type="GO" id="GO:0020037">
    <property type="term" value="F:heme binding"/>
    <property type="evidence" value="ECO:0007669"/>
    <property type="project" value="InterPro"/>
</dbReference>
<dbReference type="GO" id="GO:0046872">
    <property type="term" value="F:metal ion binding"/>
    <property type="evidence" value="ECO:0007669"/>
    <property type="project" value="UniProtKB-KW"/>
</dbReference>
<dbReference type="GO" id="GO:0004601">
    <property type="term" value="F:peroxidase activity"/>
    <property type="evidence" value="ECO:0000318"/>
    <property type="project" value="GO_Central"/>
</dbReference>
<dbReference type="GO" id="GO:0034599">
    <property type="term" value="P:cellular response to oxidative stress"/>
    <property type="evidence" value="ECO:0000315"/>
    <property type="project" value="CGD"/>
</dbReference>
<dbReference type="GO" id="GO:0034614">
    <property type="term" value="P:cellular response to reactive oxygen species"/>
    <property type="evidence" value="ECO:0000315"/>
    <property type="project" value="CGD"/>
</dbReference>
<dbReference type="GO" id="GO:0042744">
    <property type="term" value="P:hydrogen peroxide catabolic process"/>
    <property type="evidence" value="ECO:0000318"/>
    <property type="project" value="GO_Central"/>
</dbReference>
<dbReference type="GO" id="GO:0000302">
    <property type="term" value="P:response to reactive oxygen species"/>
    <property type="evidence" value="ECO:0000318"/>
    <property type="project" value="GO_Central"/>
</dbReference>
<dbReference type="FunFam" id="1.10.520.10:FF:000005">
    <property type="entry name" value="Cytochrome c peroxidase"/>
    <property type="match status" value="1"/>
</dbReference>
<dbReference type="FunFam" id="1.10.420.10:FF:000023">
    <property type="entry name" value="Peroxidase"/>
    <property type="match status" value="1"/>
</dbReference>
<dbReference type="Gene3D" id="1.10.520.10">
    <property type="match status" value="1"/>
</dbReference>
<dbReference type="Gene3D" id="1.10.420.10">
    <property type="entry name" value="Peroxidase, domain 2"/>
    <property type="match status" value="1"/>
</dbReference>
<dbReference type="InterPro" id="IPR044831">
    <property type="entry name" value="Ccp1-like"/>
</dbReference>
<dbReference type="InterPro" id="IPR002016">
    <property type="entry name" value="Haem_peroxidase"/>
</dbReference>
<dbReference type="InterPro" id="IPR010255">
    <property type="entry name" value="Haem_peroxidase_sf"/>
</dbReference>
<dbReference type="InterPro" id="IPR002207">
    <property type="entry name" value="Peroxidase_I"/>
</dbReference>
<dbReference type="PANTHER" id="PTHR31356:SF58">
    <property type="entry name" value="CYTOCHROME C PEROXIDASE, MITOCHONDRIAL"/>
    <property type="match status" value="1"/>
</dbReference>
<dbReference type="PANTHER" id="PTHR31356">
    <property type="entry name" value="THYLAKOID LUMENAL 29 KDA PROTEIN, CHLOROPLASTIC-RELATED"/>
    <property type="match status" value="1"/>
</dbReference>
<dbReference type="Pfam" id="PF00141">
    <property type="entry name" value="peroxidase"/>
    <property type="match status" value="1"/>
</dbReference>
<dbReference type="PRINTS" id="PR00459">
    <property type="entry name" value="ASPEROXIDASE"/>
</dbReference>
<dbReference type="PRINTS" id="PR00458">
    <property type="entry name" value="PEROXIDASE"/>
</dbReference>
<dbReference type="SUPFAM" id="SSF48113">
    <property type="entry name" value="Heme-dependent peroxidases"/>
    <property type="match status" value="1"/>
</dbReference>
<dbReference type="PROSITE" id="PS50873">
    <property type="entry name" value="PEROXIDASE_4"/>
    <property type="match status" value="1"/>
</dbReference>
<accession>Q5AEN1</accession>
<accession>A0A1D8PJJ5</accession>
<accession>Q5AF18</accession>
<name>CCPR_CANAL</name>
<protein>
    <recommendedName>
        <fullName>Cytochrome c peroxidase, mitochondrial</fullName>
        <shortName>CCP</shortName>
        <ecNumber evidence="2">1.11.1.5</ecNumber>
    </recommendedName>
</protein>
<gene>
    <name type="primary">CCP1</name>
    <name type="ordered locus">CAALFM_C302480CA</name>
    <name type="ORF">CaO19.238</name>
    <name type="ORF">CaO19.7868</name>
</gene>
<sequence>MATFAPHISKITKSSTKFNYGRIAKTFLGVAGSAAIATYFYNNGNPFNNNNNNNNNNGGSKNAAKALFGASAGANVKIAKVPEGKSASDYQKVYNDIATKISENLEFDENAGYYGQLLRLAWHTSGTYDKSDNSGGSYGGTMIFAPEEFDPENAGLQVGREFLMEFLVKYPWISRGDLWTLGGVAAVQESGGPKIEWRPGRVDDNTASKVPPNGRLPDASKDGKYVKDLFARMGFNERETVALLGAHVLGRCHKHNSGYDGPWGPSFNQFTNVFYTTLLGDWHVKKWDGKKQYEDDETGEFMMLPTDMALKEESYFLKYVKMYADDQDLFFKDFAKAFSKLISNGIKYPADSKPILFKTLDEQDEE</sequence>
<comment type="function">
    <text evidence="2">Destroys radicals which are normally produced within the cells and which are toxic to biological systems.</text>
</comment>
<comment type="catalytic activity">
    <reaction evidence="2">
        <text>2 Fe(II)-[cytochrome c] + H2O2 + 2 H(+) = 2 Fe(III)-[cytochrome c] + 2 H2O</text>
        <dbReference type="Rhea" id="RHEA:16581"/>
        <dbReference type="Rhea" id="RHEA-COMP:10350"/>
        <dbReference type="Rhea" id="RHEA-COMP:14399"/>
        <dbReference type="ChEBI" id="CHEBI:15377"/>
        <dbReference type="ChEBI" id="CHEBI:15378"/>
        <dbReference type="ChEBI" id="CHEBI:16240"/>
        <dbReference type="ChEBI" id="CHEBI:29033"/>
        <dbReference type="ChEBI" id="CHEBI:29034"/>
        <dbReference type="EC" id="1.11.1.5"/>
    </reaction>
</comment>
<comment type="cofactor">
    <cofactor evidence="4">
        <name>heme b</name>
        <dbReference type="ChEBI" id="CHEBI:60344"/>
    </cofactor>
    <text evidence="4">Binds 1 heme b (iron(II)-protoporphyrin IX) group per subunit.</text>
</comment>
<comment type="subunit">
    <text evidence="2">Forms a one-to-one complex with cytochrome c.</text>
</comment>
<comment type="subcellular location">
    <subcellularLocation>
        <location evidence="2">Mitochondrion matrix</location>
    </subcellularLocation>
    <subcellularLocation>
        <location evidence="2">Mitochondrion intermembrane space</location>
    </subcellularLocation>
</comment>
<comment type="similarity">
    <text evidence="6">Belongs to the peroxidase family. Cytochrome c peroxidase subfamily.</text>
</comment>
<reference key="1">
    <citation type="journal article" date="2004" name="Proc. Natl. Acad. Sci. U.S.A.">
        <title>The diploid genome sequence of Candida albicans.</title>
        <authorList>
            <person name="Jones T."/>
            <person name="Federspiel N.A."/>
            <person name="Chibana H."/>
            <person name="Dungan J."/>
            <person name="Kalman S."/>
            <person name="Magee B.B."/>
            <person name="Newport G."/>
            <person name="Thorstenson Y.R."/>
            <person name="Agabian N."/>
            <person name="Magee P.T."/>
            <person name="Davis R.W."/>
            <person name="Scherer S."/>
        </authorList>
    </citation>
    <scope>NUCLEOTIDE SEQUENCE [LARGE SCALE GENOMIC DNA]</scope>
    <source>
        <strain>SC5314 / ATCC MYA-2876</strain>
    </source>
</reference>
<reference key="2">
    <citation type="journal article" date="2007" name="Genome Biol.">
        <title>Assembly of the Candida albicans genome into sixteen supercontigs aligned on the eight chromosomes.</title>
        <authorList>
            <person name="van het Hoog M."/>
            <person name="Rast T.J."/>
            <person name="Martchenko M."/>
            <person name="Grindle S."/>
            <person name="Dignard D."/>
            <person name="Hogues H."/>
            <person name="Cuomo C."/>
            <person name="Berriman M."/>
            <person name="Scherer S."/>
            <person name="Magee B.B."/>
            <person name="Whiteway M."/>
            <person name="Chibana H."/>
            <person name="Nantel A."/>
            <person name="Magee P.T."/>
        </authorList>
    </citation>
    <scope>GENOME REANNOTATION</scope>
    <source>
        <strain>SC5314 / ATCC MYA-2876</strain>
    </source>
</reference>
<reference key="3">
    <citation type="journal article" date="2013" name="Genome Biol.">
        <title>Assembly of a phased diploid Candida albicans genome facilitates allele-specific measurements and provides a simple model for repeat and indel structure.</title>
        <authorList>
            <person name="Muzzey D."/>
            <person name="Schwartz K."/>
            <person name="Weissman J.S."/>
            <person name="Sherlock G."/>
        </authorList>
    </citation>
    <scope>NUCLEOTIDE SEQUENCE [LARGE SCALE GENOMIC DNA]</scope>
    <scope>GENOME REANNOTATION</scope>
    <source>
        <strain>SC5314 / ATCC MYA-2876</strain>
    </source>
</reference>
<evidence type="ECO:0000250" key="1"/>
<evidence type="ECO:0000250" key="2">
    <source>
        <dbReference type="UniProtKB" id="P00431"/>
    </source>
</evidence>
<evidence type="ECO:0000255" key="3"/>
<evidence type="ECO:0000255" key="4">
    <source>
        <dbReference type="PROSITE-ProRule" id="PRU00297"/>
    </source>
</evidence>
<evidence type="ECO:0000256" key="5">
    <source>
        <dbReference type="SAM" id="MobiDB-lite"/>
    </source>
</evidence>
<evidence type="ECO:0000305" key="6"/>
<feature type="transit peptide" description="Mitochondrion" evidence="3">
    <location>
        <begin position="1"/>
        <end status="unknown"/>
    </location>
</feature>
<feature type="chain" id="PRO_0000045287" description="Cytochrome c peroxidase, mitochondrial">
    <location>
        <begin status="unknown"/>
        <end position="366"/>
    </location>
</feature>
<feature type="region of interest" description="Disordered" evidence="5">
    <location>
        <begin position="195"/>
        <end position="218"/>
    </location>
</feature>
<feature type="compositionally biased region" description="Basic and acidic residues" evidence="5">
    <location>
        <begin position="195"/>
        <end position="206"/>
    </location>
</feature>
<feature type="active site" description="Proton acceptor" evidence="4">
    <location>
        <position position="123"/>
    </location>
</feature>
<feature type="active site" description="Tryptophan radical intermediate" evidence="1">
    <location>
        <position position="263"/>
    </location>
</feature>
<feature type="binding site" description="axial binding residue">
    <location>
        <position position="247"/>
    </location>
    <ligand>
        <name>heme b</name>
        <dbReference type="ChEBI" id="CHEBI:60344"/>
    </ligand>
    <ligandPart>
        <name>Fe</name>
        <dbReference type="ChEBI" id="CHEBI:18248"/>
    </ligandPart>
</feature>
<feature type="site" description="Transition state stabilizer" evidence="4">
    <location>
        <position position="119"/>
    </location>
</feature>
<proteinExistence type="inferred from homology"/>
<organism>
    <name type="scientific">Candida albicans (strain SC5314 / ATCC MYA-2876)</name>
    <name type="common">Yeast</name>
    <dbReference type="NCBI Taxonomy" id="237561"/>
    <lineage>
        <taxon>Eukaryota</taxon>
        <taxon>Fungi</taxon>
        <taxon>Dikarya</taxon>
        <taxon>Ascomycota</taxon>
        <taxon>Saccharomycotina</taxon>
        <taxon>Pichiomycetes</taxon>
        <taxon>Debaryomycetaceae</taxon>
        <taxon>Candida/Lodderomyces clade</taxon>
        <taxon>Candida</taxon>
    </lineage>
</organism>
<keyword id="KW-0349">Heme</keyword>
<keyword id="KW-0408">Iron</keyword>
<keyword id="KW-0479">Metal-binding</keyword>
<keyword id="KW-0496">Mitochondrion</keyword>
<keyword id="KW-0560">Oxidoreductase</keyword>
<keyword id="KW-0575">Peroxidase</keyword>
<keyword id="KW-1185">Reference proteome</keyword>
<keyword id="KW-0809">Transit peptide</keyword>